<organism>
    <name type="scientific">Homo sapiens</name>
    <name type="common">Human</name>
    <dbReference type="NCBI Taxonomy" id="9606"/>
    <lineage>
        <taxon>Eukaryota</taxon>
        <taxon>Metazoa</taxon>
        <taxon>Chordata</taxon>
        <taxon>Craniata</taxon>
        <taxon>Vertebrata</taxon>
        <taxon>Euteleostomi</taxon>
        <taxon>Mammalia</taxon>
        <taxon>Eutheria</taxon>
        <taxon>Euarchontoglires</taxon>
        <taxon>Primates</taxon>
        <taxon>Haplorrhini</taxon>
        <taxon>Catarrhini</taxon>
        <taxon>Hominidae</taxon>
        <taxon>Homo</taxon>
    </lineage>
</organism>
<sequence length="779" mass="89367">MGKSEGPVGMVESAGRAGQKRPGFLEGGLLLLLLLVTAALVALGVLYADRRGKQLPRLASRLCFLQEERTFVKRKPRGIPEAQEVSEVCTTPGCVIAAARILQNMDPTTEPCDDFYQFACGGWLRRHVIPETNSRYSIFDVLRDELEVILKAVLENSTAKDRPAVEKARTLYRSCMNQSVIEKRGSQPLLDILEVVGGWPVAMDRWNETVGLEWELERQLALMNSQFNRRVLIDLFIWNDDQNSSRHIIYIDQPTLGMPSREYYFNGGSNRKVREAYLQFMVSVATLLREDANLPRDSCLVQEDMVQVLELETQLAKATVPQEERHDVIALYHRMGLEELQSQFGLKGFNWTLFIQTVLSSVKIKLLPDEEVVVYGIPYLQNLENIIDTYSARTIQNYLVWRLVLDRIGSLSQRFKDTRVNYRKALFGTMVEEVRWRECVGYVNSNMENAVGSLYVREAFPGDSKSMVRELIDKVRTVFVETLDELGWMDEESKKKAQEKAMSIREQIGHPDYILEEMNRRLDEEYSNLNFSEDLYFENSLQNLKVGAQRSLRKLREKVDPNLWIIGAAVVNAFYSPNRNQIVFPAGILQPPFFSKEQPQALNFGGIGMVIGHEITHGFDDNGRNFDKNGNMMDWWSNFSTQHFREQSECMIYQYGNYSWDLADEQNVNGFNTLGENIADNGGVRQAYKAYLKWMAEGGKDQQLPGLDLTHEQLFFINYAQVWCGSYRPEFAIQSIKTDVHSPLKYRVLGSLQNLAAFADTFHCARGTPMHPKERCRVW</sequence>
<protein>
    <recommendedName>
        <fullName>Membrane metallo-endopeptidase-like 1</fullName>
        <ecNumber>3.4.24.11</ecNumber>
    </recommendedName>
    <alternativeName>
        <fullName>Membrane metallo-endopeptidase-like 2</fullName>
    </alternativeName>
    <alternativeName>
        <fullName>NEP2(m)</fullName>
    </alternativeName>
    <alternativeName>
        <fullName>Neprilysin II</fullName>
        <shortName>NEPII</shortName>
    </alternativeName>
    <alternativeName>
        <fullName>Neprilysin-2</fullName>
        <shortName>NEP2</shortName>
        <shortName>NL2</shortName>
    </alternativeName>
    <component>
        <recommendedName>
            <fullName>Membrane metallo-endopeptidase-like 1, soluble form</fullName>
        </recommendedName>
        <alternativeName>
            <fullName>Neprilysin-2 secreted</fullName>
            <shortName>NEP2(s)</shortName>
        </alternativeName>
    </component>
</protein>
<evidence type="ECO:0000250" key="1"/>
<evidence type="ECO:0000255" key="2"/>
<evidence type="ECO:0000255" key="3">
    <source>
        <dbReference type="PROSITE-ProRule" id="PRU01233"/>
    </source>
</evidence>
<evidence type="ECO:0000255" key="4">
    <source>
        <dbReference type="PROSITE-ProRule" id="PRU10095"/>
    </source>
</evidence>
<evidence type="ECO:0000269" key="5">
    <source>
    </source>
</evidence>
<evidence type="ECO:0000269" key="6">
    <source>
    </source>
</evidence>
<evidence type="ECO:0000303" key="7">
    <source>
    </source>
</evidence>
<evidence type="ECO:0000305" key="8"/>
<proteinExistence type="evidence at protein level"/>
<reference key="1">
    <citation type="journal article" date="2001" name="DNA Cell Biol.">
        <title>Molecular cloning, tissue distribution, and chromosomal localization of MMEL2, a gene coding for a novel human member of the neutral endopeptidase-24.11 family.</title>
        <authorList>
            <person name="Bonvouloir N."/>
            <person name="Lemieux N."/>
            <person name="Crine P."/>
            <person name="Boileau G."/>
            <person name="DesGroseillers L."/>
        </authorList>
    </citation>
    <scope>NUCLEOTIDE SEQUENCE [MRNA] (ISOFORM 1)</scope>
    <scope>TISSUE SPECIFICITY</scope>
</reference>
<reference key="2">
    <citation type="journal article" date="2006" name="Nature">
        <title>The DNA sequence and biological annotation of human chromosome 1.</title>
        <authorList>
            <person name="Gregory S.G."/>
            <person name="Barlow K.F."/>
            <person name="McLay K.E."/>
            <person name="Kaul R."/>
            <person name="Swarbreck D."/>
            <person name="Dunham A."/>
            <person name="Scott C.E."/>
            <person name="Howe K.L."/>
            <person name="Woodfine K."/>
            <person name="Spencer C.C.A."/>
            <person name="Jones M.C."/>
            <person name="Gillson C."/>
            <person name="Searle S."/>
            <person name="Zhou Y."/>
            <person name="Kokocinski F."/>
            <person name="McDonald L."/>
            <person name="Evans R."/>
            <person name="Phillips K."/>
            <person name="Atkinson A."/>
            <person name="Cooper R."/>
            <person name="Jones C."/>
            <person name="Hall R.E."/>
            <person name="Andrews T.D."/>
            <person name="Lloyd C."/>
            <person name="Ainscough R."/>
            <person name="Almeida J.P."/>
            <person name="Ambrose K.D."/>
            <person name="Anderson F."/>
            <person name="Andrew R.W."/>
            <person name="Ashwell R.I.S."/>
            <person name="Aubin K."/>
            <person name="Babbage A.K."/>
            <person name="Bagguley C.L."/>
            <person name="Bailey J."/>
            <person name="Beasley H."/>
            <person name="Bethel G."/>
            <person name="Bird C.P."/>
            <person name="Bray-Allen S."/>
            <person name="Brown J.Y."/>
            <person name="Brown A.J."/>
            <person name="Buckley D."/>
            <person name="Burton J."/>
            <person name="Bye J."/>
            <person name="Carder C."/>
            <person name="Chapman J.C."/>
            <person name="Clark S.Y."/>
            <person name="Clarke G."/>
            <person name="Clee C."/>
            <person name="Cobley V."/>
            <person name="Collier R.E."/>
            <person name="Corby N."/>
            <person name="Coville G.J."/>
            <person name="Davies J."/>
            <person name="Deadman R."/>
            <person name="Dunn M."/>
            <person name="Earthrowl M."/>
            <person name="Ellington A.G."/>
            <person name="Errington H."/>
            <person name="Frankish A."/>
            <person name="Frankland J."/>
            <person name="French L."/>
            <person name="Garner P."/>
            <person name="Garnett J."/>
            <person name="Gay L."/>
            <person name="Ghori M.R.J."/>
            <person name="Gibson R."/>
            <person name="Gilby L.M."/>
            <person name="Gillett W."/>
            <person name="Glithero R.J."/>
            <person name="Grafham D.V."/>
            <person name="Griffiths C."/>
            <person name="Griffiths-Jones S."/>
            <person name="Grocock R."/>
            <person name="Hammond S."/>
            <person name="Harrison E.S.I."/>
            <person name="Hart E."/>
            <person name="Haugen E."/>
            <person name="Heath P.D."/>
            <person name="Holmes S."/>
            <person name="Holt K."/>
            <person name="Howden P.J."/>
            <person name="Hunt A.R."/>
            <person name="Hunt S.E."/>
            <person name="Hunter G."/>
            <person name="Isherwood J."/>
            <person name="James R."/>
            <person name="Johnson C."/>
            <person name="Johnson D."/>
            <person name="Joy A."/>
            <person name="Kay M."/>
            <person name="Kershaw J.K."/>
            <person name="Kibukawa M."/>
            <person name="Kimberley A.M."/>
            <person name="King A."/>
            <person name="Knights A.J."/>
            <person name="Lad H."/>
            <person name="Laird G."/>
            <person name="Lawlor S."/>
            <person name="Leongamornlert D.A."/>
            <person name="Lloyd D.M."/>
            <person name="Loveland J."/>
            <person name="Lovell J."/>
            <person name="Lush M.J."/>
            <person name="Lyne R."/>
            <person name="Martin S."/>
            <person name="Mashreghi-Mohammadi M."/>
            <person name="Matthews L."/>
            <person name="Matthews N.S.W."/>
            <person name="McLaren S."/>
            <person name="Milne S."/>
            <person name="Mistry S."/>
            <person name="Moore M.J.F."/>
            <person name="Nickerson T."/>
            <person name="O'Dell C.N."/>
            <person name="Oliver K."/>
            <person name="Palmeiri A."/>
            <person name="Palmer S.A."/>
            <person name="Parker A."/>
            <person name="Patel D."/>
            <person name="Pearce A.V."/>
            <person name="Peck A.I."/>
            <person name="Pelan S."/>
            <person name="Phelps K."/>
            <person name="Phillimore B.J."/>
            <person name="Plumb R."/>
            <person name="Rajan J."/>
            <person name="Raymond C."/>
            <person name="Rouse G."/>
            <person name="Saenphimmachak C."/>
            <person name="Sehra H.K."/>
            <person name="Sheridan E."/>
            <person name="Shownkeen R."/>
            <person name="Sims S."/>
            <person name="Skuce C.D."/>
            <person name="Smith M."/>
            <person name="Steward C."/>
            <person name="Subramanian S."/>
            <person name="Sycamore N."/>
            <person name="Tracey A."/>
            <person name="Tromans A."/>
            <person name="Van Helmond Z."/>
            <person name="Wall M."/>
            <person name="Wallis J.M."/>
            <person name="White S."/>
            <person name="Whitehead S.L."/>
            <person name="Wilkinson J.E."/>
            <person name="Willey D.L."/>
            <person name="Williams H."/>
            <person name="Wilming L."/>
            <person name="Wray P.W."/>
            <person name="Wu Z."/>
            <person name="Coulson A."/>
            <person name="Vaudin M."/>
            <person name="Sulston J.E."/>
            <person name="Durbin R.M."/>
            <person name="Hubbard T."/>
            <person name="Wooster R."/>
            <person name="Dunham I."/>
            <person name="Carter N.P."/>
            <person name="McVean G."/>
            <person name="Ross M.T."/>
            <person name="Harrow J."/>
            <person name="Olson M.V."/>
            <person name="Beck S."/>
            <person name="Rogers J."/>
            <person name="Bentley D.R."/>
        </authorList>
    </citation>
    <scope>NUCLEOTIDE SEQUENCE [LARGE SCALE GENOMIC DNA]</scope>
</reference>
<reference key="3">
    <citation type="submission" date="2005-07" db="EMBL/GenBank/DDBJ databases">
        <authorList>
            <person name="Mural R.J."/>
            <person name="Istrail S."/>
            <person name="Sutton G.G."/>
            <person name="Florea L."/>
            <person name="Halpern A.L."/>
            <person name="Mobarry C.M."/>
            <person name="Lippert R."/>
            <person name="Walenz B."/>
            <person name="Shatkay H."/>
            <person name="Dew I."/>
            <person name="Miller J.R."/>
            <person name="Flanigan M.J."/>
            <person name="Edwards N.J."/>
            <person name="Bolanos R."/>
            <person name="Fasulo D."/>
            <person name="Halldorsson B.V."/>
            <person name="Hannenhalli S."/>
            <person name="Turner R."/>
            <person name="Yooseph S."/>
            <person name="Lu F."/>
            <person name="Nusskern D.R."/>
            <person name="Shue B.C."/>
            <person name="Zheng X.H."/>
            <person name="Zhong F."/>
            <person name="Delcher A.L."/>
            <person name="Huson D.H."/>
            <person name="Kravitz S.A."/>
            <person name="Mouchard L."/>
            <person name="Reinert K."/>
            <person name="Remington K.A."/>
            <person name="Clark A.G."/>
            <person name="Waterman M.S."/>
            <person name="Eichler E.E."/>
            <person name="Adams M.D."/>
            <person name="Hunkapiller M.W."/>
            <person name="Myers E.W."/>
            <person name="Venter J.C."/>
        </authorList>
    </citation>
    <scope>NUCLEOTIDE SEQUENCE [LARGE SCALE GENOMIC DNA]</scope>
</reference>
<reference key="4">
    <citation type="journal article" date="2004" name="Genome Res.">
        <title>The status, quality, and expansion of the NIH full-length cDNA project: the Mammalian Gene Collection (MGC).</title>
        <authorList>
            <consortium name="The MGC Project Team"/>
        </authorList>
    </citation>
    <scope>NUCLEOTIDE SEQUENCE [LARGE SCALE MRNA] (ISOFORMS 1; 2 AND 3)</scope>
    <scope>VARIANT THR-518</scope>
</reference>
<dbReference type="EC" id="3.4.24.11"/>
<dbReference type="EMBL" id="AF336981">
    <property type="protein sequence ID" value="AAL08942.1"/>
    <property type="status" value="ALT_FRAME"/>
    <property type="molecule type" value="mRNA"/>
</dbReference>
<dbReference type="EMBL" id="AL139246">
    <property type="status" value="NOT_ANNOTATED_CDS"/>
    <property type="molecule type" value="Genomic_DNA"/>
</dbReference>
<dbReference type="EMBL" id="AL589746">
    <property type="status" value="NOT_ANNOTATED_CDS"/>
    <property type="molecule type" value="Genomic_DNA"/>
</dbReference>
<dbReference type="EMBL" id="AL831784">
    <property type="status" value="NOT_ANNOTATED_CDS"/>
    <property type="molecule type" value="Genomic_DNA"/>
</dbReference>
<dbReference type="EMBL" id="CH471183">
    <property type="protein sequence ID" value="EAW56082.1"/>
    <property type="molecule type" value="Genomic_DNA"/>
</dbReference>
<dbReference type="EMBL" id="BC101027">
    <property type="protein sequence ID" value="AAI01028.2"/>
    <property type="status" value="ALT_INIT"/>
    <property type="molecule type" value="mRNA"/>
</dbReference>
<dbReference type="EMBL" id="BC101028">
    <property type="protein sequence ID" value="AAI01029.2"/>
    <property type="molecule type" value="mRNA"/>
</dbReference>
<dbReference type="EMBL" id="BC101029">
    <property type="protein sequence ID" value="AAI01030.1"/>
    <property type="molecule type" value="mRNA"/>
</dbReference>
<dbReference type="EMBL" id="BC101030">
    <property type="protein sequence ID" value="AAI01031.2"/>
    <property type="status" value="ALT_INIT"/>
    <property type="molecule type" value="mRNA"/>
</dbReference>
<dbReference type="CCDS" id="CCDS30569.2">
    <molecule id="Q495T6-1"/>
</dbReference>
<dbReference type="RefSeq" id="NP_258428.2">
    <molecule id="Q495T6-1"/>
    <property type="nucleotide sequence ID" value="NM_033467.4"/>
</dbReference>
<dbReference type="RefSeq" id="XP_016857799.1">
    <property type="nucleotide sequence ID" value="XM_017002310.1"/>
</dbReference>
<dbReference type="SMR" id="Q495T6"/>
<dbReference type="BioGRID" id="122609">
    <property type="interactions" value="6"/>
</dbReference>
<dbReference type="FunCoup" id="Q495T6">
    <property type="interactions" value="36"/>
</dbReference>
<dbReference type="IntAct" id="Q495T6">
    <property type="interactions" value="1"/>
</dbReference>
<dbReference type="STRING" id="9606.ENSP00000367668"/>
<dbReference type="BindingDB" id="Q495T6"/>
<dbReference type="ChEMBL" id="CHEMBL3638356"/>
<dbReference type="MEROPS" id="M13.008"/>
<dbReference type="GlyCosmos" id="Q495T6">
    <property type="glycosylation" value="5 sites, No reported glycans"/>
</dbReference>
<dbReference type="GlyGen" id="Q495T6">
    <property type="glycosylation" value="5 sites"/>
</dbReference>
<dbReference type="iPTMnet" id="Q495T6"/>
<dbReference type="PhosphoSitePlus" id="Q495T6"/>
<dbReference type="BioMuta" id="MMEL1"/>
<dbReference type="DMDM" id="114150028"/>
<dbReference type="jPOST" id="Q495T6"/>
<dbReference type="MassIVE" id="Q495T6"/>
<dbReference type="PaxDb" id="9606-ENSP00000367668"/>
<dbReference type="PeptideAtlas" id="Q495T6"/>
<dbReference type="ProteomicsDB" id="61971">
    <molecule id="Q495T6-1"/>
</dbReference>
<dbReference type="ProteomicsDB" id="61972">
    <molecule id="Q495T6-2"/>
</dbReference>
<dbReference type="ProteomicsDB" id="61973">
    <molecule id="Q495T6-3"/>
</dbReference>
<dbReference type="Antibodypedia" id="1624">
    <property type="antibodies" value="155 antibodies from 25 providers"/>
</dbReference>
<dbReference type="DNASU" id="79258"/>
<dbReference type="Ensembl" id="ENST00000378412.8">
    <molecule id="Q495T6-1"/>
    <property type="protein sequence ID" value="ENSP00000367668.3"/>
    <property type="gene ID" value="ENSG00000142606.16"/>
</dbReference>
<dbReference type="Ensembl" id="ENST00000502556.5">
    <molecule id="Q495T6-3"/>
    <property type="protein sequence ID" value="ENSP00000422492.1"/>
    <property type="gene ID" value="ENSG00000142606.16"/>
</dbReference>
<dbReference type="Ensembl" id="ENST00000504800.5">
    <molecule id="Q495T6-2"/>
    <property type="protein sequence ID" value="ENSP00000425477.1"/>
    <property type="gene ID" value="ENSG00000142606.16"/>
</dbReference>
<dbReference type="Ensembl" id="ENST00000611357.4">
    <molecule id="Q495T6-1"/>
    <property type="protein sequence ID" value="ENSP00000484606.1"/>
    <property type="gene ID" value="ENSG00000277131.4"/>
</dbReference>
<dbReference type="Ensembl" id="ENST00000621908.3">
    <molecule id="Q495T6-3"/>
    <property type="protein sequence ID" value="ENSP00000482173.1"/>
    <property type="gene ID" value="ENSG00000277131.4"/>
</dbReference>
<dbReference type="Ensembl" id="ENST00000628503.2">
    <molecule id="Q495T6-2"/>
    <property type="protein sequence ID" value="ENSP00000486668.1"/>
    <property type="gene ID" value="ENSG00000277131.4"/>
</dbReference>
<dbReference type="GeneID" id="79258"/>
<dbReference type="KEGG" id="hsa:79258"/>
<dbReference type="MANE-Select" id="ENST00000378412.8">
    <property type="protein sequence ID" value="ENSP00000367668.3"/>
    <property type="RefSeq nucleotide sequence ID" value="NM_033467.4"/>
    <property type="RefSeq protein sequence ID" value="NP_258428.2"/>
</dbReference>
<dbReference type="UCSC" id="uc001ajy.3">
    <molecule id="Q495T6-1"/>
    <property type="organism name" value="human"/>
</dbReference>
<dbReference type="AGR" id="HGNC:14668"/>
<dbReference type="CTD" id="79258"/>
<dbReference type="DisGeNET" id="79258"/>
<dbReference type="GeneCards" id="MMEL1"/>
<dbReference type="HGNC" id="HGNC:14668">
    <property type="gene designation" value="MMEL1"/>
</dbReference>
<dbReference type="HPA" id="ENSG00000142606">
    <property type="expression patterns" value="Tissue enhanced (testis)"/>
</dbReference>
<dbReference type="MalaCards" id="MMEL1"/>
<dbReference type="MIM" id="618104">
    <property type="type" value="gene"/>
</dbReference>
<dbReference type="neXtProt" id="NX_Q495T6"/>
<dbReference type="OpenTargets" id="ENSG00000142606"/>
<dbReference type="Orphanet" id="186">
    <property type="disease" value="Primary biliary cholangitis"/>
</dbReference>
<dbReference type="PharmGKB" id="PA30865"/>
<dbReference type="VEuPathDB" id="HostDB:ENSG00000142606"/>
<dbReference type="eggNOG" id="KOG3624">
    <property type="taxonomic scope" value="Eukaryota"/>
</dbReference>
<dbReference type="GeneTree" id="ENSGT00940000157799"/>
<dbReference type="HOGENOM" id="CLU_006187_4_1_1"/>
<dbReference type="InParanoid" id="Q495T6"/>
<dbReference type="OMA" id="DDAPNYG"/>
<dbReference type="OrthoDB" id="6475849at2759"/>
<dbReference type="PAN-GO" id="Q495T6">
    <property type="GO annotations" value="3 GO annotations based on evolutionary models"/>
</dbReference>
<dbReference type="PhylomeDB" id="Q495T6"/>
<dbReference type="TreeFam" id="TF315192"/>
<dbReference type="BRENDA" id="3.4.24.B14">
    <property type="organism ID" value="2681"/>
</dbReference>
<dbReference type="PathwayCommons" id="Q495T6"/>
<dbReference type="SignaLink" id="Q495T6"/>
<dbReference type="BioGRID-ORCS" id="79258">
    <property type="hits" value="14 hits in 1150 CRISPR screens"/>
</dbReference>
<dbReference type="ChiTaRS" id="MMEL1">
    <property type="organism name" value="human"/>
</dbReference>
<dbReference type="GenomeRNAi" id="79258"/>
<dbReference type="Pharos" id="Q495T6">
    <property type="development level" value="Tchem"/>
</dbReference>
<dbReference type="PRO" id="PR:Q495T6"/>
<dbReference type="Proteomes" id="UP000005640">
    <property type="component" value="Chromosome 1"/>
</dbReference>
<dbReference type="RNAct" id="Q495T6">
    <property type="molecule type" value="protein"/>
</dbReference>
<dbReference type="Bgee" id="ENSG00000142606">
    <property type="expression patterns" value="Expressed in male germ line stem cell (sensu Vertebrata) in testis and 91 other cell types or tissues"/>
</dbReference>
<dbReference type="ExpressionAtlas" id="Q495T6">
    <property type="expression patterns" value="baseline and differential"/>
</dbReference>
<dbReference type="GO" id="GO:0005615">
    <property type="term" value="C:extracellular space"/>
    <property type="evidence" value="ECO:0000314"/>
    <property type="project" value="ARUK-UCL"/>
</dbReference>
<dbReference type="GO" id="GO:0016020">
    <property type="term" value="C:membrane"/>
    <property type="evidence" value="ECO:0000314"/>
    <property type="project" value="ARUK-UCL"/>
</dbReference>
<dbReference type="GO" id="GO:0005886">
    <property type="term" value="C:plasma membrane"/>
    <property type="evidence" value="ECO:0000318"/>
    <property type="project" value="GO_Central"/>
</dbReference>
<dbReference type="GO" id="GO:0004175">
    <property type="term" value="F:endopeptidase activity"/>
    <property type="evidence" value="ECO:0000314"/>
    <property type="project" value="ARUK-UCL"/>
</dbReference>
<dbReference type="GO" id="GO:0046872">
    <property type="term" value="F:metal ion binding"/>
    <property type="evidence" value="ECO:0007669"/>
    <property type="project" value="UniProtKB-KW"/>
</dbReference>
<dbReference type="GO" id="GO:0004222">
    <property type="term" value="F:metalloendopeptidase activity"/>
    <property type="evidence" value="ECO:0000318"/>
    <property type="project" value="GO_Central"/>
</dbReference>
<dbReference type="GO" id="GO:0016485">
    <property type="term" value="P:protein processing"/>
    <property type="evidence" value="ECO:0000318"/>
    <property type="project" value="GO_Central"/>
</dbReference>
<dbReference type="GO" id="GO:0006508">
    <property type="term" value="P:proteolysis"/>
    <property type="evidence" value="ECO:0000314"/>
    <property type="project" value="ARUK-UCL"/>
</dbReference>
<dbReference type="CDD" id="cd08662">
    <property type="entry name" value="M13"/>
    <property type="match status" value="1"/>
</dbReference>
<dbReference type="Gene3D" id="3.40.390.10">
    <property type="entry name" value="Collagenase (Catalytic Domain)"/>
    <property type="match status" value="1"/>
</dbReference>
<dbReference type="Gene3D" id="1.10.1380.10">
    <property type="entry name" value="Neutral endopeptidase , domain2"/>
    <property type="match status" value="1"/>
</dbReference>
<dbReference type="InterPro" id="IPR024079">
    <property type="entry name" value="MetalloPept_cat_dom_sf"/>
</dbReference>
<dbReference type="InterPro" id="IPR000718">
    <property type="entry name" value="Peptidase_M13"/>
</dbReference>
<dbReference type="InterPro" id="IPR018497">
    <property type="entry name" value="Peptidase_M13_C"/>
</dbReference>
<dbReference type="InterPro" id="IPR042089">
    <property type="entry name" value="Peptidase_M13_dom_2"/>
</dbReference>
<dbReference type="InterPro" id="IPR008753">
    <property type="entry name" value="Peptidase_M13_N"/>
</dbReference>
<dbReference type="PANTHER" id="PTHR11733:SF141">
    <property type="entry name" value="MEMBRANE METALLO-ENDOPEPTIDASE-LIKE 1"/>
    <property type="match status" value="1"/>
</dbReference>
<dbReference type="PANTHER" id="PTHR11733">
    <property type="entry name" value="ZINC METALLOPROTEASE FAMILY M13 NEPRILYSIN-RELATED"/>
    <property type="match status" value="1"/>
</dbReference>
<dbReference type="Pfam" id="PF01431">
    <property type="entry name" value="Peptidase_M13"/>
    <property type="match status" value="1"/>
</dbReference>
<dbReference type="Pfam" id="PF05649">
    <property type="entry name" value="Peptidase_M13_N"/>
    <property type="match status" value="1"/>
</dbReference>
<dbReference type="PRINTS" id="PR00786">
    <property type="entry name" value="NEPRILYSIN"/>
</dbReference>
<dbReference type="SUPFAM" id="SSF55486">
    <property type="entry name" value="Metalloproteases ('zincins'), catalytic domain"/>
    <property type="match status" value="1"/>
</dbReference>
<dbReference type="PROSITE" id="PS51885">
    <property type="entry name" value="NEPRILYSIN"/>
    <property type="match status" value="1"/>
</dbReference>
<dbReference type="PROSITE" id="PS00142">
    <property type="entry name" value="ZINC_PROTEASE"/>
    <property type="match status" value="1"/>
</dbReference>
<keyword id="KW-0025">Alternative splicing</keyword>
<keyword id="KW-0175">Coiled coil</keyword>
<keyword id="KW-1015">Disulfide bond</keyword>
<keyword id="KW-0325">Glycoprotein</keyword>
<keyword id="KW-0378">Hydrolase</keyword>
<keyword id="KW-0472">Membrane</keyword>
<keyword id="KW-0479">Metal-binding</keyword>
<keyword id="KW-0482">Metalloprotease</keyword>
<keyword id="KW-0645">Protease</keyword>
<keyword id="KW-1267">Proteomics identification</keyword>
<keyword id="KW-1185">Reference proteome</keyword>
<keyword id="KW-0964">Secreted</keyword>
<keyword id="KW-0735">Signal-anchor</keyword>
<keyword id="KW-0812">Transmembrane</keyword>
<keyword id="KW-1133">Transmembrane helix</keyword>
<keyword id="KW-0862">Zinc</keyword>
<comment type="function">
    <text evidence="1">Metalloprotease involved in sperm function, possibly by modulating the processes of fertilization and early embryonic development. Degrades a broad variety of small peptides with a preference for peptides shorter than 3 kDa containing neutral bulky aliphatic or aromatic amino acid residues. Shares the same substrate specificity with MME and cleaves peptides at the same amide bond (By similarity).</text>
</comment>
<comment type="catalytic activity">
    <reaction>
        <text>Preferential cleavage of polypeptides between hydrophobic residues, particularly with Phe or Tyr at P1'.</text>
        <dbReference type="EC" id="3.4.24.11"/>
    </reaction>
</comment>
<comment type="cofactor">
    <cofactor evidence="1">
        <name>Zn(2+)</name>
        <dbReference type="ChEBI" id="CHEBI:29105"/>
    </cofactor>
    <text evidence="1">Binds 1 zinc ion per subunit.</text>
</comment>
<comment type="activity regulation">
    <text evidence="1">Inhibited by thiorphan and phosphoramidon.</text>
</comment>
<comment type="subcellular location">
    <subcellularLocation>
        <location>Membrane</location>
        <topology>Single-pass type II membrane protein</topology>
    </subcellularLocation>
    <subcellularLocation>
        <location>Secreted</location>
    </subcellularLocation>
    <text evidence="1">A secreted form produced by proteolytic cleavage also exists.</text>
</comment>
<comment type="alternative products">
    <event type="alternative splicing"/>
    <isoform>
        <id>Q495T6-1</id>
        <name>1</name>
        <sequence type="displayed"/>
    </isoform>
    <isoform>
        <id>Q495T6-2</id>
        <name>2</name>
        <sequence type="described" ref="VSP_020288 VSP_020289"/>
    </isoform>
    <isoform>
        <id>Q495T6-3</id>
        <name>3</name>
        <sequence type="described" ref="VSP_020287"/>
    </isoform>
</comment>
<comment type="tissue specificity">
    <text evidence="5">Predominantly expressed in testis. Weakly expressed in brain, kidney and heart.</text>
</comment>
<comment type="PTM">
    <text evidence="1">N-glycosylated.</text>
</comment>
<comment type="similarity">
    <text evidence="3 8">Belongs to the peptidase M13 family.</text>
</comment>
<comment type="sequence caution" evidence="8">
    <conflict type="erroneous initiation">
        <sequence resource="EMBL-CDS" id="AAI01028"/>
    </conflict>
    <text>Truncated N-terminus.</text>
</comment>
<comment type="sequence caution" evidence="8">
    <conflict type="erroneous initiation">
        <sequence resource="EMBL-CDS" id="AAI01031"/>
    </conflict>
    <text>Truncated N-terminus.</text>
</comment>
<comment type="sequence caution" evidence="8">
    <conflict type="frameshift">
        <sequence resource="EMBL-CDS" id="AAL08942"/>
    </conflict>
</comment>
<name>MMEL1_HUMAN</name>
<feature type="chain" id="PRO_0000248415" description="Membrane metallo-endopeptidase-like 1">
    <location>
        <begin position="1"/>
        <end position="779"/>
    </location>
</feature>
<feature type="chain" id="PRO_0000248416" description="Membrane metallo-endopeptidase-like 1, soluble form" evidence="1">
    <location>
        <begin position="74"/>
        <end position="779"/>
    </location>
</feature>
<feature type="topological domain" description="Cytoplasmic" evidence="2">
    <location>
        <begin position="1"/>
        <end position="27"/>
    </location>
</feature>
<feature type="transmembrane region" description="Helical; Signal-anchor for type II membrane protein" evidence="2">
    <location>
        <begin position="28"/>
        <end position="48"/>
    </location>
</feature>
<feature type="topological domain" description="Lumenal" evidence="2">
    <location>
        <begin position="49"/>
        <end position="779"/>
    </location>
</feature>
<feature type="domain" description="Peptidase M13" evidence="3">
    <location>
        <begin position="88"/>
        <end position="779"/>
    </location>
</feature>
<feature type="coiled-coil region" evidence="2">
    <location>
        <begin position="515"/>
        <end position="560"/>
    </location>
</feature>
<feature type="active site" evidence="3 4">
    <location>
        <position position="614"/>
    </location>
</feature>
<feature type="active site" description="Proton donor" evidence="3">
    <location>
        <position position="680"/>
    </location>
</feature>
<feature type="binding site" evidence="1">
    <location>
        <position position="135"/>
    </location>
    <ligand>
        <name>a peptide</name>
        <dbReference type="ChEBI" id="CHEBI:60466"/>
        <note>substrate</note>
    </ligand>
</feature>
<feature type="binding site" evidence="3 4">
    <location>
        <position position="613"/>
    </location>
    <ligand>
        <name>Zn(2+)</name>
        <dbReference type="ChEBI" id="CHEBI:29105"/>
        <note>catalytic</note>
    </ligand>
</feature>
<feature type="binding site" evidence="3 4">
    <location>
        <position position="617"/>
    </location>
    <ligand>
        <name>Zn(2+)</name>
        <dbReference type="ChEBI" id="CHEBI:29105"/>
        <note>catalytic</note>
    </ligand>
</feature>
<feature type="binding site" evidence="3">
    <location>
        <position position="676"/>
    </location>
    <ligand>
        <name>Zn(2+)</name>
        <dbReference type="ChEBI" id="CHEBI:29105"/>
        <note>catalytic</note>
    </ligand>
</feature>
<feature type="site" description="Cleavage" evidence="1">
    <location>
        <begin position="73"/>
        <end position="74"/>
    </location>
</feature>
<feature type="glycosylation site" description="N-linked (GlcNAc...) asparagine" evidence="2">
    <location>
        <position position="177"/>
    </location>
</feature>
<feature type="glycosylation site" description="N-linked (GlcNAc...) asparagine" evidence="2">
    <location>
        <position position="207"/>
    </location>
</feature>
<feature type="glycosylation site" description="N-linked (GlcNAc...) asparagine" evidence="2">
    <location>
        <position position="350"/>
    </location>
</feature>
<feature type="glycosylation site" description="N-linked (GlcNAc...) asparagine" evidence="2">
    <location>
        <position position="530"/>
    </location>
</feature>
<feature type="glycosylation site" description="N-linked (GlcNAc...) asparagine" evidence="2">
    <location>
        <position position="657"/>
    </location>
</feature>
<feature type="disulfide bond" evidence="3">
    <location>
        <begin position="89"/>
        <end position="94"/>
    </location>
</feature>
<feature type="disulfide bond" evidence="3">
    <location>
        <begin position="112"/>
        <end position="764"/>
    </location>
</feature>
<feature type="disulfide bond" evidence="3">
    <location>
        <begin position="120"/>
        <end position="724"/>
    </location>
</feature>
<feature type="disulfide bond" evidence="3">
    <location>
        <begin position="175"/>
        <end position="439"/>
    </location>
</feature>
<feature type="disulfide bond" evidence="3">
    <location>
        <begin position="650"/>
        <end position="776"/>
    </location>
</feature>
<feature type="splice variant" id="VSP_020287" description="In isoform 3." evidence="7">
    <location>
        <begin position="159"/>
        <end position="315"/>
    </location>
</feature>
<feature type="splice variant" id="VSP_020288" description="In isoform 2." evidence="7">
    <original>VFPAGILQPPFFSKEQPQALNFGGIGMVI</original>
    <variation>AYSLSRPWGQYSLPGSSSPPSSARSSHRP</variation>
    <location>
        <begin position="583"/>
        <end position="611"/>
    </location>
</feature>
<feature type="splice variant" id="VSP_020289" description="In isoform 2." evidence="7">
    <location>
        <begin position="612"/>
        <end position="779"/>
    </location>
</feature>
<feature type="sequence variant" id="VAR_027348" description="In dbSNP:rs3748816." evidence="6">
    <original>M</original>
    <variation>T</variation>
    <location>
        <position position="518"/>
    </location>
</feature>
<feature type="sequence conflict" description="In Ref. 4; AAI01029." evidence="8" ref="4">
    <original>W</original>
    <variation>R</variation>
    <location>
        <position position="351"/>
    </location>
</feature>
<feature type="sequence conflict" description="In Ref. 4; AAI01031." evidence="8" ref="4">
    <original>M</original>
    <variation>I</variation>
    <location>
        <position position="489"/>
    </location>
</feature>
<gene>
    <name type="primary">MMEL1</name>
    <name type="synonym">MELL1</name>
    <name type="synonym">MMEL2</name>
    <name type="synonym">NEP2</name>
</gene>
<accession>Q495T6</accession>
<accession>B9DI79</accession>
<accession>Q495T7</accession>
<accession>Q495T8</accession>
<accession>Q5SZS6</accession>
<accession>Q96PH9</accession>